<protein>
    <recommendedName>
        <fullName evidence="1">Chorismate synthase</fullName>
        <shortName evidence="1">CS</shortName>
        <ecNumber evidence="1">4.2.3.5</ecNumber>
    </recommendedName>
    <alternativeName>
        <fullName evidence="1">5-enolpyruvylshikimate-3-phosphate phospholyase</fullName>
    </alternativeName>
</protein>
<reference key="1">
    <citation type="journal article" date="2001" name="Proc. Natl. Acad. Sci. U.S.A.">
        <title>Complete genome sequence of an M1 strain of Streptococcus pyogenes.</title>
        <authorList>
            <person name="Ferretti J.J."/>
            <person name="McShan W.M."/>
            <person name="Ajdic D.J."/>
            <person name="Savic D.J."/>
            <person name="Savic G."/>
            <person name="Lyon K."/>
            <person name="Primeaux C."/>
            <person name="Sezate S."/>
            <person name="Suvorov A.N."/>
            <person name="Kenton S."/>
            <person name="Lai H.S."/>
            <person name="Lin S.P."/>
            <person name="Qian Y."/>
            <person name="Jia H.G."/>
            <person name="Najar F.Z."/>
            <person name="Ren Q."/>
            <person name="Zhu H."/>
            <person name="Song L."/>
            <person name="White J."/>
            <person name="Yuan X."/>
            <person name="Clifton S.W."/>
            <person name="Roe B.A."/>
            <person name="McLaughlin R.E."/>
        </authorList>
    </citation>
    <scope>NUCLEOTIDE SEQUENCE [LARGE SCALE GENOMIC DNA]</scope>
    <source>
        <strain>ATCC 700294 / SF370 / Serotype M1</strain>
    </source>
</reference>
<reference key="2">
    <citation type="journal article" date="2005" name="J. Infect. Dis.">
        <title>Evolutionary origin and emergence of a highly successful clone of serotype M1 group A Streptococcus involved multiple horizontal gene transfer events.</title>
        <authorList>
            <person name="Sumby P."/>
            <person name="Porcella S.F."/>
            <person name="Madrigal A.G."/>
            <person name="Barbian K.D."/>
            <person name="Virtaneva K."/>
            <person name="Ricklefs S.M."/>
            <person name="Sturdevant D.E."/>
            <person name="Graham M.R."/>
            <person name="Vuopio-Varkila J."/>
            <person name="Hoe N.P."/>
            <person name="Musser J.M."/>
        </authorList>
    </citation>
    <scope>NUCLEOTIDE SEQUENCE [LARGE SCALE GENOMIC DNA]</scope>
    <source>
        <strain>ATCC BAA-947 / MGAS5005 / Serotype M1</strain>
    </source>
</reference>
<accession>Q9A0E4</accession>
<accession>Q48ZH5</accession>
<gene>
    <name evidence="1" type="primary">aroC</name>
    <name type="synonym">aroF</name>
    <name type="ordered locus">SPy_0810</name>
    <name type="ordered locus">M5005_Spy0625</name>
</gene>
<sequence length="388" mass="42538">MRYLTAGESHGPSLTAIIEGIPAGLTLHPADIDHELQRRQGGYGRGARMSIETDRVQISSGVRHGKTTGAPITLTVINKDHQKWLDVMAVGDIEETLKLKRRVKHPRPGHADLVGGIKYHFNDLRDALERSSARETTMRVAVGAVAKRILAELGIDMLHHILIFGGITITIPSKLSFRELQERALHSELSIVNPKQEEEIKTYIDKIKKEGDTIGGIIETIVQGVPAGLGSYVQWDKKLDAKLAQAVLSINAFKGVEFGAGFDMGFQKGSQVMDEITWTPTQGYGRQTNHLGGFEGGMTTGQPLVVKGVMKPIPTLYKPLMSVDIDSHEPYKATVERSDPTALPAAGVIMENVVATVLAKEILETFSSTTMSELQKAFSDYRAYVKQF</sequence>
<keyword id="KW-0028">Amino-acid biosynthesis</keyword>
<keyword id="KW-0057">Aromatic amino acid biosynthesis</keyword>
<keyword id="KW-0274">FAD</keyword>
<keyword id="KW-0285">Flavoprotein</keyword>
<keyword id="KW-0288">FMN</keyword>
<keyword id="KW-0456">Lyase</keyword>
<keyword id="KW-0521">NADP</keyword>
<keyword id="KW-1185">Reference proteome</keyword>
<evidence type="ECO:0000255" key="1">
    <source>
        <dbReference type="HAMAP-Rule" id="MF_00300"/>
    </source>
</evidence>
<organism>
    <name type="scientific">Streptococcus pyogenes serotype M1</name>
    <dbReference type="NCBI Taxonomy" id="301447"/>
    <lineage>
        <taxon>Bacteria</taxon>
        <taxon>Bacillati</taxon>
        <taxon>Bacillota</taxon>
        <taxon>Bacilli</taxon>
        <taxon>Lactobacillales</taxon>
        <taxon>Streptococcaceae</taxon>
        <taxon>Streptococcus</taxon>
    </lineage>
</organism>
<dbReference type="EC" id="4.2.3.5" evidence="1"/>
<dbReference type="EMBL" id="AE004092">
    <property type="protein sequence ID" value="AAK33747.1"/>
    <property type="molecule type" value="Genomic_DNA"/>
</dbReference>
<dbReference type="EMBL" id="CP000017">
    <property type="protein sequence ID" value="AAZ51243.1"/>
    <property type="molecule type" value="Genomic_DNA"/>
</dbReference>
<dbReference type="RefSeq" id="NP_269026.1">
    <property type="nucleotide sequence ID" value="NC_002737.2"/>
</dbReference>
<dbReference type="SMR" id="Q9A0E4"/>
<dbReference type="PaxDb" id="1314-HKU360_00636"/>
<dbReference type="KEGG" id="spy:SPy_0810"/>
<dbReference type="KEGG" id="spz:M5005_Spy0625"/>
<dbReference type="PATRIC" id="fig|160490.10.peg.693"/>
<dbReference type="HOGENOM" id="CLU_034547_2_0_9"/>
<dbReference type="OMA" id="MLSINAV"/>
<dbReference type="UniPathway" id="UPA00053">
    <property type="reaction ID" value="UER00090"/>
</dbReference>
<dbReference type="Proteomes" id="UP000000750">
    <property type="component" value="Chromosome"/>
</dbReference>
<dbReference type="GO" id="GO:0005829">
    <property type="term" value="C:cytosol"/>
    <property type="evidence" value="ECO:0007669"/>
    <property type="project" value="TreeGrafter"/>
</dbReference>
<dbReference type="GO" id="GO:0004107">
    <property type="term" value="F:chorismate synthase activity"/>
    <property type="evidence" value="ECO:0007669"/>
    <property type="project" value="UniProtKB-UniRule"/>
</dbReference>
<dbReference type="GO" id="GO:0010181">
    <property type="term" value="F:FMN binding"/>
    <property type="evidence" value="ECO:0007669"/>
    <property type="project" value="TreeGrafter"/>
</dbReference>
<dbReference type="GO" id="GO:0008652">
    <property type="term" value="P:amino acid biosynthetic process"/>
    <property type="evidence" value="ECO:0007669"/>
    <property type="project" value="UniProtKB-KW"/>
</dbReference>
<dbReference type="GO" id="GO:0009073">
    <property type="term" value="P:aromatic amino acid family biosynthetic process"/>
    <property type="evidence" value="ECO:0007669"/>
    <property type="project" value="UniProtKB-KW"/>
</dbReference>
<dbReference type="GO" id="GO:0009423">
    <property type="term" value="P:chorismate biosynthetic process"/>
    <property type="evidence" value="ECO:0007669"/>
    <property type="project" value="UniProtKB-UniRule"/>
</dbReference>
<dbReference type="CDD" id="cd07304">
    <property type="entry name" value="Chorismate_synthase"/>
    <property type="match status" value="1"/>
</dbReference>
<dbReference type="FunFam" id="3.60.150.10:FF:000002">
    <property type="entry name" value="Chorismate synthase"/>
    <property type="match status" value="1"/>
</dbReference>
<dbReference type="Gene3D" id="3.60.150.10">
    <property type="entry name" value="Chorismate synthase AroC"/>
    <property type="match status" value="1"/>
</dbReference>
<dbReference type="HAMAP" id="MF_00300">
    <property type="entry name" value="Chorismate_synth"/>
    <property type="match status" value="1"/>
</dbReference>
<dbReference type="InterPro" id="IPR000453">
    <property type="entry name" value="Chorismate_synth"/>
</dbReference>
<dbReference type="InterPro" id="IPR035904">
    <property type="entry name" value="Chorismate_synth_AroC_sf"/>
</dbReference>
<dbReference type="InterPro" id="IPR020541">
    <property type="entry name" value="Chorismate_synthase_CS"/>
</dbReference>
<dbReference type="NCBIfam" id="TIGR00033">
    <property type="entry name" value="aroC"/>
    <property type="match status" value="1"/>
</dbReference>
<dbReference type="NCBIfam" id="NF003793">
    <property type="entry name" value="PRK05382.1"/>
    <property type="match status" value="1"/>
</dbReference>
<dbReference type="PANTHER" id="PTHR21085">
    <property type="entry name" value="CHORISMATE SYNTHASE"/>
    <property type="match status" value="1"/>
</dbReference>
<dbReference type="PANTHER" id="PTHR21085:SF0">
    <property type="entry name" value="CHORISMATE SYNTHASE"/>
    <property type="match status" value="1"/>
</dbReference>
<dbReference type="Pfam" id="PF01264">
    <property type="entry name" value="Chorismate_synt"/>
    <property type="match status" value="1"/>
</dbReference>
<dbReference type="PIRSF" id="PIRSF001456">
    <property type="entry name" value="Chorismate_synth"/>
    <property type="match status" value="1"/>
</dbReference>
<dbReference type="SUPFAM" id="SSF103263">
    <property type="entry name" value="Chorismate synthase, AroC"/>
    <property type="match status" value="1"/>
</dbReference>
<dbReference type="PROSITE" id="PS00787">
    <property type="entry name" value="CHORISMATE_SYNTHASE_1"/>
    <property type="match status" value="1"/>
</dbReference>
<dbReference type="PROSITE" id="PS00788">
    <property type="entry name" value="CHORISMATE_SYNTHASE_2"/>
    <property type="match status" value="1"/>
</dbReference>
<dbReference type="PROSITE" id="PS00789">
    <property type="entry name" value="CHORISMATE_SYNTHASE_3"/>
    <property type="match status" value="1"/>
</dbReference>
<comment type="function">
    <text evidence="1">Catalyzes the anti-1,4-elimination of the C-3 phosphate and the C-6 proR hydrogen from 5-enolpyruvylshikimate-3-phosphate (EPSP) to yield chorismate, which is the branch point compound that serves as the starting substrate for the three terminal pathways of aromatic amino acid biosynthesis. This reaction introduces a second double bond into the aromatic ring system.</text>
</comment>
<comment type="catalytic activity">
    <reaction evidence="1">
        <text>5-O-(1-carboxyvinyl)-3-phosphoshikimate = chorismate + phosphate</text>
        <dbReference type="Rhea" id="RHEA:21020"/>
        <dbReference type="ChEBI" id="CHEBI:29748"/>
        <dbReference type="ChEBI" id="CHEBI:43474"/>
        <dbReference type="ChEBI" id="CHEBI:57701"/>
        <dbReference type="EC" id="4.2.3.5"/>
    </reaction>
</comment>
<comment type="cofactor">
    <cofactor evidence="1">
        <name>FMNH2</name>
        <dbReference type="ChEBI" id="CHEBI:57618"/>
    </cofactor>
    <text evidence="1">Reduced FMN (FMNH(2)).</text>
</comment>
<comment type="pathway">
    <text evidence="1">Metabolic intermediate biosynthesis; chorismate biosynthesis; chorismate from D-erythrose 4-phosphate and phosphoenolpyruvate: step 7/7.</text>
</comment>
<comment type="subunit">
    <text evidence="1">Homotetramer.</text>
</comment>
<comment type="similarity">
    <text evidence="1">Belongs to the chorismate synthase family.</text>
</comment>
<proteinExistence type="inferred from homology"/>
<feature type="chain" id="PRO_0000140657" description="Chorismate synthase">
    <location>
        <begin position="1"/>
        <end position="388"/>
    </location>
</feature>
<feature type="binding site" evidence="1">
    <location>
        <position position="39"/>
    </location>
    <ligand>
        <name>NADP(+)</name>
        <dbReference type="ChEBI" id="CHEBI:58349"/>
    </ligand>
</feature>
<feature type="binding site" evidence="1">
    <location>
        <position position="45"/>
    </location>
    <ligand>
        <name>NADP(+)</name>
        <dbReference type="ChEBI" id="CHEBI:58349"/>
    </ligand>
</feature>
<feature type="binding site" evidence="1">
    <location>
        <begin position="130"/>
        <end position="132"/>
    </location>
    <ligand>
        <name>FMN</name>
        <dbReference type="ChEBI" id="CHEBI:58210"/>
    </ligand>
</feature>
<feature type="binding site" evidence="1">
    <location>
        <begin position="251"/>
        <end position="252"/>
    </location>
    <ligand>
        <name>FMN</name>
        <dbReference type="ChEBI" id="CHEBI:58210"/>
    </ligand>
</feature>
<feature type="binding site" evidence="1">
    <location>
        <position position="296"/>
    </location>
    <ligand>
        <name>FMN</name>
        <dbReference type="ChEBI" id="CHEBI:58210"/>
    </ligand>
</feature>
<feature type="binding site" evidence="1">
    <location>
        <begin position="311"/>
        <end position="315"/>
    </location>
    <ligand>
        <name>FMN</name>
        <dbReference type="ChEBI" id="CHEBI:58210"/>
    </ligand>
</feature>
<feature type="binding site" evidence="1">
    <location>
        <position position="337"/>
    </location>
    <ligand>
        <name>FMN</name>
        <dbReference type="ChEBI" id="CHEBI:58210"/>
    </ligand>
</feature>
<name>AROC_STRP1</name>